<proteinExistence type="evidence at transcript level"/>
<gene>
    <name type="primary">Zfp27</name>
    <name type="synonym">Mkr4</name>
    <name type="synonym">Zfp-27</name>
</gene>
<organism>
    <name type="scientific">Mus musculus</name>
    <name type="common">Mouse</name>
    <dbReference type="NCBI Taxonomy" id="10090"/>
    <lineage>
        <taxon>Eukaryota</taxon>
        <taxon>Metazoa</taxon>
        <taxon>Chordata</taxon>
        <taxon>Craniata</taxon>
        <taxon>Vertebrata</taxon>
        <taxon>Euteleostomi</taxon>
        <taxon>Mammalia</taxon>
        <taxon>Eutheria</taxon>
        <taxon>Euarchontoglires</taxon>
        <taxon>Glires</taxon>
        <taxon>Rodentia</taxon>
        <taxon>Myomorpha</taxon>
        <taxon>Muroidea</taxon>
        <taxon>Muridae</taxon>
        <taxon>Murinae</taxon>
        <taxon>Mus</taxon>
        <taxon>Mus</taxon>
    </lineage>
</organism>
<protein>
    <recommendedName>
        <fullName>Zinc finger protein 27</fullName>
        <shortName>Zfp-27</shortName>
    </recommendedName>
    <alternativeName>
        <fullName>Protein mKR4</fullName>
    </alternativeName>
</protein>
<sequence>MDVTIDFSREEWQHLDPAQRSLYRDVVQETYSHLRSVEELQQIGDQKKTYQQIGHKSASDMVFITKTLGAESCHDYSGVRKVIHVNSYIVLPPKRPRHWDPPEDEPKHSSDLQTHDESNGLKRTKRITEYGKISSCINTEHILTGEKLPDHNQCGKVLGYKQIPCQYQKIHTGEKSYECAEFGKIFTQKSQLRVHVTSPTGEKLYVCVECGKACSQTSEFLTHQKTHTREKPYKCGDCGKSFFQVSSLFRHRRIHTGEKLYDCSHCGKGFSYNSDLRIHQKIHTGEKRHGCVDCGKAFTQKSTLRMHQKIHTGERAYVCIECGQAFIQKTHLVAHRRIHTGEKPYACDGCGKAFLSKSQLLVHQRIHSRVRPCVSLDRAKPFSSAPNLLPRKKVQMREKSSICAECGKAFTYRSELIIHQRTHTGEKPYQCGDCGKAFTQKSALTVHRRIHTGEKSYVCVKCGLAFVQRAHLDAHQVIHTGEKPYQCGHCGKFFTSKSQLHVHKRIHTGEKPYVCSNCGKAFANRSNLITHQKTHTGEKAYVCARCGKAFTQRSDLVTHQRIHTGEKPYGCSTCGKAFTQKSHLSIHEKIHTGERQYGCRDCGKAFNQKSILIVHQKIHTGEKPHVCAECGRAFIRKSNFITHQRIHTGEKPYGCTDCGKSFTSKSQLLVHRPIHTGEKPYVCAECGKAFSGRSNLSKHQKTHTGEKPYACSECGKSFRQKSELITHHRIHTGEKPYDCGDCGKSFTKKSQLQVHQRIHTGEKPYRCAECGKAFTDRSNLNKHQTTHTGEKPYKCVVCGKGFVQKSVLSIHENVHTSAV</sequence>
<keyword id="KW-0025">Alternative splicing</keyword>
<keyword id="KW-0479">Metal-binding</keyword>
<keyword id="KW-0539">Nucleus</keyword>
<keyword id="KW-1185">Reference proteome</keyword>
<keyword id="KW-0677">Repeat</keyword>
<keyword id="KW-0804">Transcription</keyword>
<keyword id="KW-0805">Transcription regulation</keyword>
<keyword id="KW-0862">Zinc</keyword>
<keyword id="KW-0863">Zinc-finger</keyword>
<feature type="chain" id="PRO_0000047288" description="Zinc finger protein 27">
    <location>
        <begin position="1"/>
        <end position="819"/>
    </location>
</feature>
<feature type="domain" description="KRAB" evidence="2">
    <location>
        <begin position="1"/>
        <end position="75"/>
    </location>
</feature>
<feature type="zinc finger region" description="C2H2-type 1" evidence="1">
    <location>
        <begin position="205"/>
        <end position="227"/>
    </location>
</feature>
<feature type="zinc finger region" description="C2H2-type 2" evidence="1">
    <location>
        <begin position="233"/>
        <end position="255"/>
    </location>
</feature>
<feature type="zinc finger region" description="C2H2-type 3" evidence="1">
    <location>
        <begin position="261"/>
        <end position="283"/>
    </location>
</feature>
<feature type="zinc finger region" description="C2H2-type 4" evidence="1">
    <location>
        <begin position="289"/>
        <end position="311"/>
    </location>
</feature>
<feature type="zinc finger region" description="C2H2-type 5" evidence="1">
    <location>
        <begin position="317"/>
        <end position="339"/>
    </location>
</feature>
<feature type="zinc finger region" description="C2H2-type 6" evidence="1">
    <location>
        <begin position="345"/>
        <end position="367"/>
    </location>
</feature>
<feature type="zinc finger region" description="C2H2-type 7" evidence="1">
    <location>
        <begin position="401"/>
        <end position="423"/>
    </location>
</feature>
<feature type="zinc finger region" description="C2H2-type 8" evidence="1">
    <location>
        <begin position="429"/>
        <end position="451"/>
    </location>
</feature>
<feature type="zinc finger region" description="C2H2-type 9" evidence="1">
    <location>
        <begin position="457"/>
        <end position="479"/>
    </location>
</feature>
<feature type="zinc finger region" description="C2H2-type 10" evidence="1">
    <location>
        <begin position="485"/>
        <end position="507"/>
    </location>
</feature>
<feature type="zinc finger region" description="C2H2-type 11" evidence="1">
    <location>
        <begin position="513"/>
        <end position="535"/>
    </location>
</feature>
<feature type="zinc finger region" description="C2H2-type 12" evidence="1">
    <location>
        <begin position="541"/>
        <end position="563"/>
    </location>
</feature>
<feature type="zinc finger region" description="C2H2-type 13" evidence="1">
    <location>
        <begin position="569"/>
        <end position="591"/>
    </location>
</feature>
<feature type="zinc finger region" description="C2H2-type 14" evidence="1">
    <location>
        <begin position="597"/>
        <end position="619"/>
    </location>
</feature>
<feature type="zinc finger region" description="C2H2-type 15" evidence="1">
    <location>
        <begin position="625"/>
        <end position="647"/>
    </location>
</feature>
<feature type="zinc finger region" description="C2H2-type 16" evidence="1">
    <location>
        <begin position="653"/>
        <end position="675"/>
    </location>
</feature>
<feature type="zinc finger region" description="C2H2-type 17" evidence="1">
    <location>
        <begin position="681"/>
        <end position="703"/>
    </location>
</feature>
<feature type="zinc finger region" description="C2H2-type 18" evidence="1">
    <location>
        <begin position="709"/>
        <end position="731"/>
    </location>
</feature>
<feature type="zinc finger region" description="C2H2-type 19" evidence="1">
    <location>
        <begin position="737"/>
        <end position="759"/>
    </location>
</feature>
<feature type="zinc finger region" description="C2H2-type 20" evidence="1">
    <location>
        <begin position="765"/>
        <end position="787"/>
    </location>
</feature>
<feature type="zinc finger region" description="C2H2-type 21" evidence="1">
    <location>
        <begin position="793"/>
        <end position="815"/>
    </location>
</feature>
<feature type="region of interest" description="Disordered" evidence="3">
    <location>
        <begin position="93"/>
        <end position="123"/>
    </location>
</feature>
<feature type="compositionally biased region" description="Basic and acidic residues" evidence="3">
    <location>
        <begin position="98"/>
        <end position="120"/>
    </location>
</feature>
<feature type="splice variant" id="VSP_016025" description="In isoform 2." evidence="4">
    <location>
        <begin position="337"/>
        <end position="364"/>
    </location>
</feature>
<feature type="sequence conflict" description="In Ref. 1; BAC25981." evidence="5" ref="1">
    <original>S</original>
    <variation>N</variation>
    <location>
        <position position="59"/>
    </location>
</feature>
<feature type="sequence conflict" description="In Ref. 3; AAA37119/CAA31106." evidence="5" ref="3">
    <original>DL</original>
    <variation>EP</variation>
    <location>
        <begin position="555"/>
        <end position="556"/>
    </location>
</feature>
<feature type="sequence conflict" description="In Ref. 3; AAA37119/CAA31106." evidence="5" ref="3">
    <original>ST</original>
    <variation>RP</variation>
    <location>
        <begin position="572"/>
        <end position="573"/>
    </location>
</feature>
<feature type="sequence conflict" description="In Ref. 3; AAA37119/CAA31106." evidence="5" ref="3">
    <original>H</original>
    <variation>Q</variation>
    <location>
        <position position="625"/>
    </location>
</feature>
<evidence type="ECO:0000255" key="1">
    <source>
        <dbReference type="PROSITE-ProRule" id="PRU00042"/>
    </source>
</evidence>
<evidence type="ECO:0000255" key="2">
    <source>
        <dbReference type="PROSITE-ProRule" id="PRU00119"/>
    </source>
</evidence>
<evidence type="ECO:0000256" key="3">
    <source>
        <dbReference type="SAM" id="MobiDB-lite"/>
    </source>
</evidence>
<evidence type="ECO:0000303" key="4">
    <source>
    </source>
</evidence>
<evidence type="ECO:0000305" key="5"/>
<accession>P10077</accession>
<accession>Q6PCZ6</accession>
<accession>Q8CED4</accession>
<reference key="1">
    <citation type="journal article" date="2005" name="Science">
        <title>The transcriptional landscape of the mammalian genome.</title>
        <authorList>
            <person name="Carninci P."/>
            <person name="Kasukawa T."/>
            <person name="Katayama S."/>
            <person name="Gough J."/>
            <person name="Frith M.C."/>
            <person name="Maeda N."/>
            <person name="Oyama R."/>
            <person name="Ravasi T."/>
            <person name="Lenhard B."/>
            <person name="Wells C."/>
            <person name="Kodzius R."/>
            <person name="Shimokawa K."/>
            <person name="Bajic V.B."/>
            <person name="Brenner S.E."/>
            <person name="Batalov S."/>
            <person name="Forrest A.R."/>
            <person name="Zavolan M."/>
            <person name="Davis M.J."/>
            <person name="Wilming L.G."/>
            <person name="Aidinis V."/>
            <person name="Allen J.E."/>
            <person name="Ambesi-Impiombato A."/>
            <person name="Apweiler R."/>
            <person name="Aturaliya R.N."/>
            <person name="Bailey T.L."/>
            <person name="Bansal M."/>
            <person name="Baxter L."/>
            <person name="Beisel K.W."/>
            <person name="Bersano T."/>
            <person name="Bono H."/>
            <person name="Chalk A.M."/>
            <person name="Chiu K.P."/>
            <person name="Choudhary V."/>
            <person name="Christoffels A."/>
            <person name="Clutterbuck D.R."/>
            <person name="Crowe M.L."/>
            <person name="Dalla E."/>
            <person name="Dalrymple B.P."/>
            <person name="de Bono B."/>
            <person name="Della Gatta G."/>
            <person name="di Bernardo D."/>
            <person name="Down T."/>
            <person name="Engstrom P."/>
            <person name="Fagiolini M."/>
            <person name="Faulkner G."/>
            <person name="Fletcher C.F."/>
            <person name="Fukushima T."/>
            <person name="Furuno M."/>
            <person name="Futaki S."/>
            <person name="Gariboldi M."/>
            <person name="Georgii-Hemming P."/>
            <person name="Gingeras T.R."/>
            <person name="Gojobori T."/>
            <person name="Green R.E."/>
            <person name="Gustincich S."/>
            <person name="Harbers M."/>
            <person name="Hayashi Y."/>
            <person name="Hensch T.K."/>
            <person name="Hirokawa N."/>
            <person name="Hill D."/>
            <person name="Huminiecki L."/>
            <person name="Iacono M."/>
            <person name="Ikeo K."/>
            <person name="Iwama A."/>
            <person name="Ishikawa T."/>
            <person name="Jakt M."/>
            <person name="Kanapin A."/>
            <person name="Katoh M."/>
            <person name="Kawasawa Y."/>
            <person name="Kelso J."/>
            <person name="Kitamura H."/>
            <person name="Kitano H."/>
            <person name="Kollias G."/>
            <person name="Krishnan S.P."/>
            <person name="Kruger A."/>
            <person name="Kummerfeld S.K."/>
            <person name="Kurochkin I.V."/>
            <person name="Lareau L.F."/>
            <person name="Lazarevic D."/>
            <person name="Lipovich L."/>
            <person name="Liu J."/>
            <person name="Liuni S."/>
            <person name="McWilliam S."/>
            <person name="Madan Babu M."/>
            <person name="Madera M."/>
            <person name="Marchionni L."/>
            <person name="Matsuda H."/>
            <person name="Matsuzawa S."/>
            <person name="Miki H."/>
            <person name="Mignone F."/>
            <person name="Miyake S."/>
            <person name="Morris K."/>
            <person name="Mottagui-Tabar S."/>
            <person name="Mulder N."/>
            <person name="Nakano N."/>
            <person name="Nakauchi H."/>
            <person name="Ng P."/>
            <person name="Nilsson R."/>
            <person name="Nishiguchi S."/>
            <person name="Nishikawa S."/>
            <person name="Nori F."/>
            <person name="Ohara O."/>
            <person name="Okazaki Y."/>
            <person name="Orlando V."/>
            <person name="Pang K.C."/>
            <person name="Pavan W.J."/>
            <person name="Pavesi G."/>
            <person name="Pesole G."/>
            <person name="Petrovsky N."/>
            <person name="Piazza S."/>
            <person name="Reed J."/>
            <person name="Reid J.F."/>
            <person name="Ring B.Z."/>
            <person name="Ringwald M."/>
            <person name="Rost B."/>
            <person name="Ruan Y."/>
            <person name="Salzberg S.L."/>
            <person name="Sandelin A."/>
            <person name="Schneider C."/>
            <person name="Schoenbach C."/>
            <person name="Sekiguchi K."/>
            <person name="Semple C.A."/>
            <person name="Seno S."/>
            <person name="Sessa L."/>
            <person name="Sheng Y."/>
            <person name="Shibata Y."/>
            <person name="Shimada H."/>
            <person name="Shimada K."/>
            <person name="Silva D."/>
            <person name="Sinclair B."/>
            <person name="Sperling S."/>
            <person name="Stupka E."/>
            <person name="Sugiura K."/>
            <person name="Sultana R."/>
            <person name="Takenaka Y."/>
            <person name="Taki K."/>
            <person name="Tammoja K."/>
            <person name="Tan S.L."/>
            <person name="Tang S."/>
            <person name="Taylor M.S."/>
            <person name="Tegner J."/>
            <person name="Teichmann S.A."/>
            <person name="Ueda H.R."/>
            <person name="van Nimwegen E."/>
            <person name="Verardo R."/>
            <person name="Wei C.L."/>
            <person name="Yagi K."/>
            <person name="Yamanishi H."/>
            <person name="Zabarovsky E."/>
            <person name="Zhu S."/>
            <person name="Zimmer A."/>
            <person name="Hide W."/>
            <person name="Bult C."/>
            <person name="Grimmond S.M."/>
            <person name="Teasdale R.D."/>
            <person name="Liu E.T."/>
            <person name="Brusic V."/>
            <person name="Quackenbush J."/>
            <person name="Wahlestedt C."/>
            <person name="Mattick J.S."/>
            <person name="Hume D.A."/>
            <person name="Kai C."/>
            <person name="Sasaki D."/>
            <person name="Tomaru Y."/>
            <person name="Fukuda S."/>
            <person name="Kanamori-Katayama M."/>
            <person name="Suzuki M."/>
            <person name="Aoki J."/>
            <person name="Arakawa T."/>
            <person name="Iida J."/>
            <person name="Imamura K."/>
            <person name="Itoh M."/>
            <person name="Kato T."/>
            <person name="Kawaji H."/>
            <person name="Kawagashira N."/>
            <person name="Kawashima T."/>
            <person name="Kojima M."/>
            <person name="Kondo S."/>
            <person name="Konno H."/>
            <person name="Nakano K."/>
            <person name="Ninomiya N."/>
            <person name="Nishio T."/>
            <person name="Okada M."/>
            <person name="Plessy C."/>
            <person name="Shibata K."/>
            <person name="Shiraki T."/>
            <person name="Suzuki S."/>
            <person name="Tagami M."/>
            <person name="Waki K."/>
            <person name="Watahiki A."/>
            <person name="Okamura-Oho Y."/>
            <person name="Suzuki H."/>
            <person name="Kawai J."/>
            <person name="Hayashizaki Y."/>
        </authorList>
    </citation>
    <scope>NUCLEOTIDE SEQUENCE [LARGE SCALE MRNA] (ISOFORM 1)</scope>
    <source>
        <strain>C57BL/6J</strain>
        <tissue>Skin</tissue>
        <tissue>Wolffian duct</tissue>
    </source>
</reference>
<reference key="2">
    <citation type="journal article" date="2004" name="Genome Res.">
        <title>The status, quality, and expansion of the NIH full-length cDNA project: the Mammalian Gene Collection (MGC).</title>
        <authorList>
            <consortium name="The MGC Project Team"/>
        </authorList>
    </citation>
    <scope>NUCLEOTIDE SEQUENCE [LARGE SCALE MRNA] (ISOFORM 1)</scope>
    <source>
        <strain>C57BL/6J</strain>
        <tissue>Brain</tissue>
    </source>
</reference>
<reference key="3">
    <citation type="journal article" date="1988" name="Nucleic Acids Res.">
        <title>Specific and ubiquitous expression of different Zn finger protein genes in the mouse.</title>
        <authorList>
            <person name="Chowdhury K."/>
            <person name="Rohdewohld H."/>
            <person name="Gruss P."/>
        </authorList>
    </citation>
    <scope>NUCLEOTIDE SEQUENCE [MRNA] OF 240-686 (ISOFORM 2)</scope>
</reference>
<name>ZFP27_MOUSE</name>
<dbReference type="EMBL" id="AK028500">
    <property type="protein sequence ID" value="BAC25981.1"/>
    <property type="molecule type" value="mRNA"/>
</dbReference>
<dbReference type="EMBL" id="AK135293">
    <property type="protein sequence ID" value="BAE22479.1"/>
    <property type="molecule type" value="mRNA"/>
</dbReference>
<dbReference type="EMBL" id="AK147732">
    <property type="protein sequence ID" value="BAE28102.1"/>
    <property type="molecule type" value="mRNA"/>
</dbReference>
<dbReference type="EMBL" id="BC059037">
    <property type="protein sequence ID" value="AAH59037.1"/>
    <property type="molecule type" value="mRNA"/>
</dbReference>
<dbReference type="EMBL" id="M36515">
    <property type="protein sequence ID" value="AAA37119.1"/>
    <property type="status" value="ALT_FRAME"/>
    <property type="molecule type" value="mRNA"/>
</dbReference>
<dbReference type="EMBL" id="X12593">
    <property type="protein sequence ID" value="CAA31106.1"/>
    <property type="status" value="ALT_FRAME"/>
    <property type="molecule type" value="mRNA"/>
</dbReference>
<dbReference type="CCDS" id="CCDS21076.1">
    <molecule id="P10077-1"/>
</dbReference>
<dbReference type="PIR" id="S03678">
    <property type="entry name" value="S03678"/>
</dbReference>
<dbReference type="RefSeq" id="NP_001032796.1">
    <molecule id="P10077-1"/>
    <property type="nucleotide sequence ID" value="NM_001037707.1"/>
</dbReference>
<dbReference type="RefSeq" id="NP_001272726.1">
    <molecule id="P10077-1"/>
    <property type="nucleotide sequence ID" value="NM_001285797.1"/>
</dbReference>
<dbReference type="RefSeq" id="NP_001272727.1">
    <molecule id="P10077-1"/>
    <property type="nucleotide sequence ID" value="NM_001285798.1"/>
</dbReference>
<dbReference type="RefSeq" id="NP_001408742.1">
    <molecule id="P10077-1"/>
    <property type="nucleotide sequence ID" value="NM_001421813.1"/>
</dbReference>
<dbReference type="RefSeq" id="NP_001408743.1">
    <molecule id="P10077-1"/>
    <property type="nucleotide sequence ID" value="NM_001421814.1"/>
</dbReference>
<dbReference type="RefSeq" id="NP_001408744.1">
    <molecule id="P10077-1"/>
    <property type="nucleotide sequence ID" value="NM_001421815.1"/>
</dbReference>
<dbReference type="RefSeq" id="NP_001408745.1">
    <molecule id="P10077-1"/>
    <property type="nucleotide sequence ID" value="NM_001421816.1"/>
</dbReference>
<dbReference type="RefSeq" id="NP_001408746.1">
    <molecule id="P10077-1"/>
    <property type="nucleotide sequence ID" value="NM_001421817.1"/>
</dbReference>
<dbReference type="RefSeq" id="NP_035884.2">
    <molecule id="P10077-1"/>
    <property type="nucleotide sequence ID" value="NM_011754.2"/>
</dbReference>
<dbReference type="RefSeq" id="XP_011248783.1">
    <property type="nucleotide sequence ID" value="XM_011250481.2"/>
</dbReference>
<dbReference type="RefSeq" id="XP_011248784.1">
    <property type="nucleotide sequence ID" value="XM_011250482.2"/>
</dbReference>
<dbReference type="RefSeq" id="XP_017177621.1">
    <property type="nucleotide sequence ID" value="XM_017322132.1"/>
</dbReference>
<dbReference type="SMR" id="P10077"/>
<dbReference type="BioGRID" id="204653">
    <property type="interactions" value="25"/>
</dbReference>
<dbReference type="FunCoup" id="P10077">
    <property type="interactions" value="4"/>
</dbReference>
<dbReference type="STRING" id="10090.ENSMUSP00000123953"/>
<dbReference type="iPTMnet" id="P10077"/>
<dbReference type="PhosphoSitePlus" id="P10077"/>
<dbReference type="PaxDb" id="10090-ENSMUSP00000123953"/>
<dbReference type="DNASU" id="22689"/>
<dbReference type="Ensembl" id="ENSMUST00000053521.15">
    <molecule id="P10077-1"/>
    <property type="protein sequence ID" value="ENSMUSP00000054012.9"/>
    <property type="gene ID" value="ENSMUSG00000062040.15"/>
</dbReference>
<dbReference type="Ensembl" id="ENSMUST00000159920.2">
    <molecule id="P10077-1"/>
    <property type="protein sequence ID" value="ENSMUSP00000125232.2"/>
    <property type="gene ID" value="ENSMUSG00000062040.15"/>
</dbReference>
<dbReference type="Ensembl" id="ENSMUST00000161904.8">
    <molecule id="P10077-1"/>
    <property type="protein sequence ID" value="ENSMUSP00000124684.2"/>
    <property type="gene ID" value="ENSMUSG00000062040.15"/>
</dbReference>
<dbReference type="Ensembl" id="ENSMUST00000162592.8">
    <molecule id="P10077-1"/>
    <property type="protein sequence ID" value="ENSMUSP00000123953.2"/>
    <property type="gene ID" value="ENSMUSG00000062040.15"/>
</dbReference>
<dbReference type="Ensembl" id="ENSMUST00000172448.2">
    <molecule id="P10077-1"/>
    <property type="protein sequence ID" value="ENSMUSP00000127677.2"/>
    <property type="gene ID" value="ENSMUSG00000062040.15"/>
</dbReference>
<dbReference type="GeneID" id="22689"/>
<dbReference type="KEGG" id="mmu:22689"/>
<dbReference type="UCSC" id="uc009gcl.1">
    <molecule id="P10077-1"/>
    <property type="organism name" value="mouse"/>
</dbReference>
<dbReference type="AGR" id="MGI:99174"/>
<dbReference type="CTD" id="22689"/>
<dbReference type="MGI" id="MGI:99174">
    <property type="gene designation" value="Zfp27"/>
</dbReference>
<dbReference type="VEuPathDB" id="HostDB:ENSMUSG00000062040"/>
<dbReference type="eggNOG" id="KOG1721">
    <property type="taxonomic scope" value="Eukaryota"/>
</dbReference>
<dbReference type="GeneTree" id="ENSGT00940000166306"/>
<dbReference type="HOGENOM" id="CLU_002678_17_1_1"/>
<dbReference type="InParanoid" id="P10077"/>
<dbReference type="OMA" id="TEVLHTC"/>
<dbReference type="OrthoDB" id="654211at2759"/>
<dbReference type="PhylomeDB" id="P10077"/>
<dbReference type="TreeFam" id="TF343410"/>
<dbReference type="Reactome" id="R-MMU-212436">
    <property type="pathway name" value="Generic Transcription Pathway"/>
</dbReference>
<dbReference type="BioGRID-ORCS" id="22689">
    <property type="hits" value="3 hits in 76 CRISPR screens"/>
</dbReference>
<dbReference type="ChiTaRS" id="Zfp27">
    <property type="organism name" value="mouse"/>
</dbReference>
<dbReference type="PRO" id="PR:P10077"/>
<dbReference type="Proteomes" id="UP000000589">
    <property type="component" value="Chromosome 7"/>
</dbReference>
<dbReference type="RNAct" id="P10077">
    <property type="molecule type" value="protein"/>
</dbReference>
<dbReference type="Bgee" id="ENSMUSG00000062040">
    <property type="expression patterns" value="Expressed in ureteric bud trunk and 171 other cell types or tissues"/>
</dbReference>
<dbReference type="GO" id="GO:0005634">
    <property type="term" value="C:nucleus"/>
    <property type="evidence" value="ECO:0007669"/>
    <property type="project" value="UniProtKB-SubCell"/>
</dbReference>
<dbReference type="GO" id="GO:0008270">
    <property type="term" value="F:zinc ion binding"/>
    <property type="evidence" value="ECO:0007669"/>
    <property type="project" value="UniProtKB-KW"/>
</dbReference>
<dbReference type="GO" id="GO:0006355">
    <property type="term" value="P:regulation of DNA-templated transcription"/>
    <property type="evidence" value="ECO:0007669"/>
    <property type="project" value="InterPro"/>
</dbReference>
<dbReference type="CDD" id="cd07765">
    <property type="entry name" value="KRAB_A-box"/>
    <property type="match status" value="1"/>
</dbReference>
<dbReference type="FunFam" id="3.30.160.60:FF:000295">
    <property type="entry name" value="zinc finger protein 19"/>
    <property type="match status" value="1"/>
</dbReference>
<dbReference type="FunFam" id="3.30.160.60:FF:000358">
    <property type="entry name" value="zinc finger protein 24"/>
    <property type="match status" value="1"/>
</dbReference>
<dbReference type="FunFam" id="3.30.160.60:FF:000128">
    <property type="entry name" value="zinc finger protein 268 isoform X1"/>
    <property type="match status" value="1"/>
</dbReference>
<dbReference type="FunFam" id="3.30.160.60:FF:003308">
    <property type="entry name" value="Zinc finger protein 27"/>
    <property type="match status" value="1"/>
</dbReference>
<dbReference type="FunFam" id="3.30.160.60:FF:000003">
    <property type="entry name" value="Zinc finger protein 3 homolog"/>
    <property type="match status" value="1"/>
</dbReference>
<dbReference type="FunFam" id="3.30.160.60:FF:002343">
    <property type="entry name" value="Zinc finger protein 33A"/>
    <property type="match status" value="5"/>
</dbReference>
<dbReference type="FunFam" id="3.30.160.60:FF:000016">
    <property type="entry name" value="zinc finger protein 37 homolog"/>
    <property type="match status" value="1"/>
</dbReference>
<dbReference type="FunFam" id="3.30.160.60:FF:000268">
    <property type="entry name" value="zinc finger protein 484 isoform X2"/>
    <property type="match status" value="3"/>
</dbReference>
<dbReference type="FunFam" id="3.30.160.60:FF:001270">
    <property type="entry name" value="zinc finger protein 583 isoform X1"/>
    <property type="match status" value="1"/>
</dbReference>
<dbReference type="FunFam" id="3.30.160.60:FF:000754">
    <property type="entry name" value="Zinc finger protein 585A"/>
    <property type="match status" value="3"/>
</dbReference>
<dbReference type="FunFam" id="3.30.160.60:FF:001396">
    <property type="entry name" value="Zinc finger protein 585A"/>
    <property type="match status" value="1"/>
</dbReference>
<dbReference type="FunFam" id="3.30.160.60:FF:001475">
    <property type="entry name" value="Zinc finger protein 585A"/>
    <property type="match status" value="1"/>
</dbReference>
<dbReference type="FunFam" id="3.30.160.60:FF:000624">
    <property type="entry name" value="zinc finger protein 697"/>
    <property type="match status" value="1"/>
</dbReference>
<dbReference type="FunFam" id="3.30.160.60:FF:000642">
    <property type="entry name" value="Zinc finger with KRAB and SCAN domains 2"/>
    <property type="match status" value="1"/>
</dbReference>
<dbReference type="Gene3D" id="6.10.140.140">
    <property type="match status" value="1"/>
</dbReference>
<dbReference type="Gene3D" id="3.30.160.60">
    <property type="entry name" value="Classic Zinc Finger"/>
    <property type="match status" value="22"/>
</dbReference>
<dbReference type="InterPro" id="IPR001909">
    <property type="entry name" value="KRAB"/>
</dbReference>
<dbReference type="InterPro" id="IPR036051">
    <property type="entry name" value="KRAB_dom_sf"/>
</dbReference>
<dbReference type="InterPro" id="IPR036236">
    <property type="entry name" value="Znf_C2H2_sf"/>
</dbReference>
<dbReference type="InterPro" id="IPR013087">
    <property type="entry name" value="Znf_C2H2_type"/>
</dbReference>
<dbReference type="PANTHER" id="PTHR24393:SF158">
    <property type="entry name" value="C2H2-TYPE DOMAIN-CONTAINING PROTEIN"/>
    <property type="match status" value="1"/>
</dbReference>
<dbReference type="PANTHER" id="PTHR24393">
    <property type="entry name" value="ZINC FINGER PROTEIN"/>
    <property type="match status" value="1"/>
</dbReference>
<dbReference type="Pfam" id="PF01352">
    <property type="entry name" value="KRAB"/>
    <property type="match status" value="1"/>
</dbReference>
<dbReference type="Pfam" id="PF00096">
    <property type="entry name" value="zf-C2H2"/>
    <property type="match status" value="21"/>
</dbReference>
<dbReference type="SMART" id="SM00349">
    <property type="entry name" value="KRAB"/>
    <property type="match status" value="1"/>
</dbReference>
<dbReference type="SMART" id="SM00355">
    <property type="entry name" value="ZnF_C2H2"/>
    <property type="match status" value="21"/>
</dbReference>
<dbReference type="SUPFAM" id="SSF57667">
    <property type="entry name" value="beta-beta-alpha zinc fingers"/>
    <property type="match status" value="12"/>
</dbReference>
<dbReference type="SUPFAM" id="SSF109640">
    <property type="entry name" value="KRAB domain (Kruppel-associated box)"/>
    <property type="match status" value="1"/>
</dbReference>
<dbReference type="PROSITE" id="PS50805">
    <property type="entry name" value="KRAB"/>
    <property type="match status" value="1"/>
</dbReference>
<dbReference type="PROSITE" id="PS00028">
    <property type="entry name" value="ZINC_FINGER_C2H2_1"/>
    <property type="match status" value="21"/>
</dbReference>
<dbReference type="PROSITE" id="PS50157">
    <property type="entry name" value="ZINC_FINGER_C2H2_2"/>
    <property type="match status" value="22"/>
</dbReference>
<comment type="function">
    <text>May be involved in transcriptional regulation.</text>
</comment>
<comment type="subcellular location">
    <subcellularLocation>
        <location evidence="5">Nucleus</location>
    </subcellularLocation>
</comment>
<comment type="alternative products">
    <event type="alternative splicing"/>
    <isoform>
        <id>P10077-1</id>
        <name>1</name>
        <sequence type="displayed"/>
    </isoform>
    <isoform>
        <id>P10077-2</id>
        <name>2</name>
        <sequence type="described" ref="VSP_016025"/>
    </isoform>
</comment>
<comment type="similarity">
    <text evidence="5">Belongs to the krueppel C2H2-type zinc-finger protein family.</text>
</comment>
<comment type="sequence caution" evidence="5">
    <conflict type="frameshift">
        <sequence resource="EMBL-CDS" id="CAA31106"/>
    </conflict>
</comment>